<name>PROA_SHEDO</name>
<keyword id="KW-0028">Amino-acid biosynthesis</keyword>
<keyword id="KW-0963">Cytoplasm</keyword>
<keyword id="KW-0521">NADP</keyword>
<keyword id="KW-0560">Oxidoreductase</keyword>
<keyword id="KW-0641">Proline biosynthesis</keyword>
<keyword id="KW-1185">Reference proteome</keyword>
<organism>
    <name type="scientific">Shewanella denitrificans (strain OS217 / ATCC BAA-1090 / DSM 15013)</name>
    <dbReference type="NCBI Taxonomy" id="318161"/>
    <lineage>
        <taxon>Bacteria</taxon>
        <taxon>Pseudomonadati</taxon>
        <taxon>Pseudomonadota</taxon>
        <taxon>Gammaproteobacteria</taxon>
        <taxon>Alteromonadales</taxon>
        <taxon>Shewanellaceae</taxon>
        <taxon>Shewanella</taxon>
    </lineage>
</organism>
<reference key="1">
    <citation type="submission" date="2006-03" db="EMBL/GenBank/DDBJ databases">
        <title>Complete sequence of Shewanella denitrificans OS217.</title>
        <authorList>
            <consortium name="US DOE Joint Genome Institute"/>
            <person name="Copeland A."/>
            <person name="Lucas S."/>
            <person name="Lapidus A."/>
            <person name="Barry K."/>
            <person name="Detter J.C."/>
            <person name="Glavina del Rio T."/>
            <person name="Hammon N."/>
            <person name="Israni S."/>
            <person name="Dalin E."/>
            <person name="Tice H."/>
            <person name="Pitluck S."/>
            <person name="Brettin T."/>
            <person name="Bruce D."/>
            <person name="Han C."/>
            <person name="Tapia R."/>
            <person name="Gilna P."/>
            <person name="Kiss H."/>
            <person name="Schmutz J."/>
            <person name="Larimer F."/>
            <person name="Land M."/>
            <person name="Hauser L."/>
            <person name="Kyrpides N."/>
            <person name="Lykidis A."/>
            <person name="Richardson P."/>
        </authorList>
    </citation>
    <scope>NUCLEOTIDE SEQUENCE [LARGE SCALE GENOMIC DNA]</scope>
    <source>
        <strain>OS217 / ATCC BAA-1090 / DSM 15013</strain>
    </source>
</reference>
<evidence type="ECO:0000255" key="1">
    <source>
        <dbReference type="HAMAP-Rule" id="MF_00412"/>
    </source>
</evidence>
<accession>Q12SX8</accession>
<gene>
    <name evidence="1" type="primary">proA</name>
    <name type="ordered locus">Sden_0151</name>
</gene>
<feature type="chain" id="PRO_0000340915" description="Gamma-glutamyl phosphate reductase">
    <location>
        <begin position="1"/>
        <end position="420"/>
    </location>
</feature>
<dbReference type="EC" id="1.2.1.41" evidence="1"/>
<dbReference type="EMBL" id="CP000302">
    <property type="protein sequence ID" value="ABE53448.1"/>
    <property type="molecule type" value="Genomic_DNA"/>
</dbReference>
<dbReference type="RefSeq" id="WP_011494617.1">
    <property type="nucleotide sequence ID" value="NC_007954.1"/>
</dbReference>
<dbReference type="SMR" id="Q12SX8"/>
<dbReference type="STRING" id="318161.Sden_0151"/>
<dbReference type="KEGG" id="sdn:Sden_0151"/>
<dbReference type="eggNOG" id="COG0014">
    <property type="taxonomic scope" value="Bacteria"/>
</dbReference>
<dbReference type="HOGENOM" id="CLU_030231_0_0_6"/>
<dbReference type="OrthoDB" id="9809970at2"/>
<dbReference type="UniPathway" id="UPA00098">
    <property type="reaction ID" value="UER00360"/>
</dbReference>
<dbReference type="Proteomes" id="UP000001982">
    <property type="component" value="Chromosome"/>
</dbReference>
<dbReference type="GO" id="GO:0005737">
    <property type="term" value="C:cytoplasm"/>
    <property type="evidence" value="ECO:0007669"/>
    <property type="project" value="UniProtKB-SubCell"/>
</dbReference>
<dbReference type="GO" id="GO:0004350">
    <property type="term" value="F:glutamate-5-semialdehyde dehydrogenase activity"/>
    <property type="evidence" value="ECO:0007669"/>
    <property type="project" value="UniProtKB-UniRule"/>
</dbReference>
<dbReference type="GO" id="GO:0050661">
    <property type="term" value="F:NADP binding"/>
    <property type="evidence" value="ECO:0007669"/>
    <property type="project" value="InterPro"/>
</dbReference>
<dbReference type="GO" id="GO:0055129">
    <property type="term" value="P:L-proline biosynthetic process"/>
    <property type="evidence" value="ECO:0007669"/>
    <property type="project" value="UniProtKB-UniRule"/>
</dbReference>
<dbReference type="CDD" id="cd07079">
    <property type="entry name" value="ALDH_F18-19_ProA-GPR"/>
    <property type="match status" value="1"/>
</dbReference>
<dbReference type="FunFam" id="3.40.309.10:FF:000006">
    <property type="entry name" value="Gamma-glutamyl phosphate reductase"/>
    <property type="match status" value="1"/>
</dbReference>
<dbReference type="Gene3D" id="3.40.605.10">
    <property type="entry name" value="Aldehyde Dehydrogenase, Chain A, domain 1"/>
    <property type="match status" value="1"/>
</dbReference>
<dbReference type="Gene3D" id="3.40.309.10">
    <property type="entry name" value="Aldehyde Dehydrogenase, Chain A, domain 2"/>
    <property type="match status" value="1"/>
</dbReference>
<dbReference type="HAMAP" id="MF_00412">
    <property type="entry name" value="ProA"/>
    <property type="match status" value="1"/>
</dbReference>
<dbReference type="InterPro" id="IPR016161">
    <property type="entry name" value="Ald_DH/histidinol_DH"/>
</dbReference>
<dbReference type="InterPro" id="IPR016163">
    <property type="entry name" value="Ald_DH_C"/>
</dbReference>
<dbReference type="InterPro" id="IPR016162">
    <property type="entry name" value="Ald_DH_N"/>
</dbReference>
<dbReference type="InterPro" id="IPR015590">
    <property type="entry name" value="Aldehyde_DH_dom"/>
</dbReference>
<dbReference type="InterPro" id="IPR020593">
    <property type="entry name" value="G-glutamylP_reductase_CS"/>
</dbReference>
<dbReference type="InterPro" id="IPR012134">
    <property type="entry name" value="Glu-5-SA_DH"/>
</dbReference>
<dbReference type="InterPro" id="IPR000965">
    <property type="entry name" value="GPR_dom"/>
</dbReference>
<dbReference type="NCBIfam" id="NF001221">
    <property type="entry name" value="PRK00197.1"/>
    <property type="match status" value="1"/>
</dbReference>
<dbReference type="NCBIfam" id="TIGR00407">
    <property type="entry name" value="proA"/>
    <property type="match status" value="1"/>
</dbReference>
<dbReference type="PANTHER" id="PTHR11063:SF8">
    <property type="entry name" value="DELTA-1-PYRROLINE-5-CARBOXYLATE SYNTHASE"/>
    <property type="match status" value="1"/>
</dbReference>
<dbReference type="PANTHER" id="PTHR11063">
    <property type="entry name" value="GLUTAMATE SEMIALDEHYDE DEHYDROGENASE"/>
    <property type="match status" value="1"/>
</dbReference>
<dbReference type="Pfam" id="PF00171">
    <property type="entry name" value="Aldedh"/>
    <property type="match status" value="1"/>
</dbReference>
<dbReference type="PIRSF" id="PIRSF000151">
    <property type="entry name" value="GPR"/>
    <property type="match status" value="1"/>
</dbReference>
<dbReference type="SUPFAM" id="SSF53720">
    <property type="entry name" value="ALDH-like"/>
    <property type="match status" value="1"/>
</dbReference>
<dbReference type="PROSITE" id="PS01223">
    <property type="entry name" value="PROA"/>
    <property type="match status" value="1"/>
</dbReference>
<protein>
    <recommendedName>
        <fullName evidence="1">Gamma-glutamyl phosphate reductase</fullName>
        <shortName evidence="1">GPR</shortName>
        <ecNumber evidence="1">1.2.1.41</ecNumber>
    </recommendedName>
    <alternativeName>
        <fullName evidence="1">Glutamate-5-semialdehyde dehydrogenase</fullName>
    </alternativeName>
    <alternativeName>
        <fullName evidence="1">Glutamyl-gamma-semialdehyde dehydrogenase</fullName>
        <shortName evidence="1">GSA dehydrogenase</shortName>
    </alternativeName>
</protein>
<comment type="function">
    <text evidence="1">Catalyzes the NADPH-dependent reduction of L-glutamate 5-phosphate into L-glutamate 5-semialdehyde and phosphate. The product spontaneously undergoes cyclization to form 1-pyrroline-5-carboxylate.</text>
</comment>
<comment type="catalytic activity">
    <reaction evidence="1">
        <text>L-glutamate 5-semialdehyde + phosphate + NADP(+) = L-glutamyl 5-phosphate + NADPH + H(+)</text>
        <dbReference type="Rhea" id="RHEA:19541"/>
        <dbReference type="ChEBI" id="CHEBI:15378"/>
        <dbReference type="ChEBI" id="CHEBI:43474"/>
        <dbReference type="ChEBI" id="CHEBI:57783"/>
        <dbReference type="ChEBI" id="CHEBI:58066"/>
        <dbReference type="ChEBI" id="CHEBI:58274"/>
        <dbReference type="ChEBI" id="CHEBI:58349"/>
        <dbReference type="EC" id="1.2.1.41"/>
    </reaction>
</comment>
<comment type="pathway">
    <text evidence="1">Amino-acid biosynthesis; L-proline biosynthesis; L-glutamate 5-semialdehyde from L-glutamate: step 2/2.</text>
</comment>
<comment type="subcellular location">
    <subcellularLocation>
        <location evidence="1">Cytoplasm</location>
    </subcellularLocation>
</comment>
<comment type="similarity">
    <text evidence="1">Belongs to the gamma-glutamyl phosphate reductase family.</text>
</comment>
<proteinExistence type="inferred from homology"/>
<sequence length="420" mass="45431">MNNQSLSLIETLSRDAATAAQTLAVLDEQTKNTVLLDMAKSLRASTAEILAANQQDLTRAEEDNLGSAMLDRLLLTPERIEAMAQGIETIVSLPDPVGITRDLSERPNGIKIRKMRIPLGVVCMIYEARPNVTADAGALCFKSGNAVVLRGGKEALQSSLVIAKVLQAVLQQHKLPKALITVIPDPDRGLMMELMQQRAYIDVIIPRGGEGLINFVTDNSKIPVIQHFKGVCHLYVDKDADLDNAMALLLNGKTQRTGVCNALEGLIVHQDVAEAFLSKAAVELASHKVKINACSRAAKYFTGCTVLDDSEFGQEYLDLEIAIRIVDDFDHAIDHIRAFGSHHTEVISTKNDATAMRFQRTVDASVVMVNASSRFSDGGELGLGAEIGIATSKLHAYGPMGLESLTAEKYLVNGTGQVRS</sequence>